<feature type="signal peptide" evidence="3">
    <location>
        <begin position="1"/>
        <end position="21"/>
    </location>
</feature>
<feature type="chain" id="PRO_0000454225" description="Cytotoxin 1">
    <location>
        <begin position="22"/>
        <end position="81"/>
    </location>
</feature>
<feature type="disulfide bond" evidence="2">
    <location>
        <begin position="24"/>
        <end position="42"/>
    </location>
</feature>
<feature type="disulfide bond" evidence="2">
    <location>
        <begin position="35"/>
        <end position="59"/>
    </location>
</feature>
<feature type="disulfide bond" evidence="2">
    <location>
        <begin position="63"/>
        <end position="74"/>
    </location>
</feature>
<feature type="disulfide bond" evidence="2">
    <location>
        <begin position="75"/>
        <end position="80"/>
    </location>
</feature>
<evidence type="ECO:0000250" key="1">
    <source>
        <dbReference type="UniProtKB" id="P01470"/>
    </source>
</evidence>
<evidence type="ECO:0000250" key="2">
    <source>
        <dbReference type="UniProtKB" id="P60301"/>
    </source>
</evidence>
<evidence type="ECO:0000255" key="3"/>
<evidence type="ECO:0000269" key="4">
    <source>
    </source>
</evidence>
<evidence type="ECO:0000303" key="5">
    <source>
    </source>
</evidence>
<evidence type="ECO:0000305" key="6"/>
<evidence type="ECO:0000305" key="7">
    <source>
    </source>
</evidence>
<evidence type="ECO:0000312" key="8">
    <source>
        <dbReference type="EMBL" id="QQL13717.1"/>
    </source>
</evidence>
<name>3SA1_NAJSU</name>
<keyword id="KW-0204">Cytolysis</keyword>
<keyword id="KW-1015">Disulfide bond</keyword>
<keyword id="KW-0472">Membrane</keyword>
<keyword id="KW-0582">Pharmaceutical</keyword>
<keyword id="KW-0964">Secreted</keyword>
<keyword id="KW-0732">Signal</keyword>
<keyword id="KW-1052">Target cell membrane</keyword>
<keyword id="KW-1053">Target membrane</keyword>
<keyword id="KW-0800">Toxin</keyword>
<comment type="function">
    <text evidence="1 4">Shows cytolytic activity on many different cells by forming pores in lipid membranes (By similarity). Exhibits concentration-dependent growth inhibitory effects in the lung cell lines A549 (IC(50)= 0.88) and NL20 (IC(50)= 1.91), in the prostate cell lines PC-3 (IC(50)= 3.13 ug/ml) and RWPE-1 (IC(50)=0.35 ug/ml), and in the breast cell lines MCF-7 (IC(50)= 9.10 ug/ml) and 184B5 (IC(50)=6.21 ug/ml), with high selectivity for the lung cancer cell line A549 (selectivity index=2.17) (PubMed:33263003). Induces primarily necrosis in the A549 lung cancer cell line, and mainly caspase-independent late apoptosis in the breast cancer cells line MCF-7 and in the prostate cancer cell line PC-3 (PubMed:33263003).</text>
</comment>
<comment type="subunit">
    <text evidence="2">Monomer in solution; homodimer and oligomer in the presence of negatively charged lipids forming a pore with a size ranging between 20 and 30 Angstroms.</text>
</comment>
<comment type="subcellular location">
    <subcellularLocation>
        <location evidence="4">Secreted</location>
    </subcellularLocation>
    <subcellularLocation>
        <location evidence="2">Target cell membrane</location>
    </subcellularLocation>
</comment>
<comment type="tissue specificity">
    <text evidence="7">Expressed by the venom gland.</text>
</comment>
<comment type="pharmaceutical">
    <text evidence="4">Exhibits anticancer properties by inhibiting growth in the A549 lung cancer cell line with high selectivity by inducing necrosis, but not in prostate (PC-3) and breast (MCF-7) cancer cell lines.</text>
</comment>
<comment type="miscellaneous">
    <text evidence="6">Is classified as a P-type cytotoxin, since a proline residue stands at position 51 (Pro-31 in standard classification).</text>
</comment>
<comment type="similarity">
    <text evidence="6">Belongs to the three-finger toxin family. Short-chain subfamily. Type IA cytotoxin sub-subfamily.</text>
</comment>
<organism>
    <name type="scientific">Naja sumatrana</name>
    <name type="common">Equatorial spitting cobra</name>
    <name type="synonym">Naja tripudians var. sumatrana</name>
    <dbReference type="NCBI Taxonomy" id="1108807"/>
    <lineage>
        <taxon>Eukaryota</taxon>
        <taxon>Metazoa</taxon>
        <taxon>Chordata</taxon>
        <taxon>Craniata</taxon>
        <taxon>Vertebrata</taxon>
        <taxon>Euteleostomi</taxon>
        <taxon>Lepidosauria</taxon>
        <taxon>Squamata</taxon>
        <taxon>Bifurcata</taxon>
        <taxon>Unidentata</taxon>
        <taxon>Episquamata</taxon>
        <taxon>Toxicofera</taxon>
        <taxon>Serpentes</taxon>
        <taxon>Colubroidea</taxon>
        <taxon>Elapidae</taxon>
        <taxon>Elapinae</taxon>
        <taxon>Naja</taxon>
    </lineage>
</organism>
<dbReference type="EMBL" id="MT977669">
    <property type="protein sequence ID" value="QQL13717.1"/>
    <property type="molecule type" value="mRNA"/>
</dbReference>
<dbReference type="SMR" id="A0A7T7DMY7"/>
<dbReference type="GO" id="GO:0005576">
    <property type="term" value="C:extracellular region"/>
    <property type="evidence" value="ECO:0007669"/>
    <property type="project" value="UniProtKB-SubCell"/>
</dbReference>
<dbReference type="GO" id="GO:0016020">
    <property type="term" value="C:membrane"/>
    <property type="evidence" value="ECO:0007669"/>
    <property type="project" value="UniProtKB-KW"/>
</dbReference>
<dbReference type="GO" id="GO:0044218">
    <property type="term" value="C:other organism cell membrane"/>
    <property type="evidence" value="ECO:0007669"/>
    <property type="project" value="UniProtKB-KW"/>
</dbReference>
<dbReference type="GO" id="GO:0090729">
    <property type="term" value="F:toxin activity"/>
    <property type="evidence" value="ECO:0007669"/>
    <property type="project" value="UniProtKB-KW"/>
</dbReference>
<dbReference type="GO" id="GO:0031640">
    <property type="term" value="P:killing of cells of another organism"/>
    <property type="evidence" value="ECO:0007669"/>
    <property type="project" value="UniProtKB-KW"/>
</dbReference>
<dbReference type="CDD" id="cd00206">
    <property type="entry name" value="TFP_snake_toxin"/>
    <property type="match status" value="1"/>
</dbReference>
<dbReference type="FunFam" id="2.10.60.10:FF:000024">
    <property type="entry name" value="Cytotoxin 1"/>
    <property type="match status" value="1"/>
</dbReference>
<dbReference type="Gene3D" id="2.10.60.10">
    <property type="entry name" value="CD59"/>
    <property type="match status" value="1"/>
</dbReference>
<dbReference type="InterPro" id="IPR003572">
    <property type="entry name" value="Cytotoxin_Cobra"/>
</dbReference>
<dbReference type="InterPro" id="IPR003571">
    <property type="entry name" value="Snake_3FTx"/>
</dbReference>
<dbReference type="InterPro" id="IPR045860">
    <property type="entry name" value="Snake_toxin-like_sf"/>
</dbReference>
<dbReference type="InterPro" id="IPR018354">
    <property type="entry name" value="Snake_toxin_con_site"/>
</dbReference>
<dbReference type="InterPro" id="IPR054131">
    <property type="entry name" value="Toxin_cobra-type"/>
</dbReference>
<dbReference type="Pfam" id="PF21947">
    <property type="entry name" value="Toxin_cobra-type"/>
    <property type="match status" value="1"/>
</dbReference>
<dbReference type="PRINTS" id="PR00282">
    <property type="entry name" value="CYTOTOXIN"/>
</dbReference>
<dbReference type="SUPFAM" id="SSF57302">
    <property type="entry name" value="Snake toxin-like"/>
    <property type="match status" value="1"/>
</dbReference>
<dbReference type="PROSITE" id="PS00272">
    <property type="entry name" value="SNAKE_TOXIN"/>
    <property type="match status" value="1"/>
</dbReference>
<protein>
    <recommendedName>
        <fullName evidence="5">Cytotoxin 1</fullName>
        <shortName evidence="6">CX1</shortName>
    </recommendedName>
    <alternativeName>
        <fullName evidence="6">Cardiotoxin-1</fullName>
        <shortName evidence="6">CTX-1</shortName>
        <shortName evidence="6">CTX1</shortName>
    </alternativeName>
</protein>
<reference evidence="8" key="1">
    <citation type="journal article" date="2019" name="Toxins">
        <title>Exploring the Diversity and Novelty of Toxin Genes in Naja sumatrana, the Equatorial Spitting Cobra from Malaysia through De Novo Venom-Gland Transcriptomics.</title>
        <authorList>
            <person name="Chong H.P."/>
            <person name="Tan K.Y."/>
            <person name="Tan N.H."/>
            <person name="Tan C.H."/>
        </authorList>
    </citation>
    <scope>NUCLEOTIDE SEQUENCE [MRNA]</scope>
    <source>
        <tissue evidence="8">Venom gland</tissue>
    </source>
</reference>
<reference evidence="6" key="2">
    <citation type="journal article" date="2020" name="Front. Mol. Biosci.">
        <title>Cytotoxicity of Snake Venoms and Cytotoxins From Two Southeast Asian Cobras (Naja sumatrana, Naja kaouthia): Exploration of Anticancer Potential, Selectivity, and Cell Death Mechanism.</title>
        <authorList>
            <person name="Chong H.P."/>
            <person name="Tan K.Y."/>
            <person name="Tan C.H."/>
        </authorList>
    </citation>
    <scope>FUNCTION</scope>
    <scope>IDENTIFICATION BY MASS SPECTROMETRY</scope>
    <scope>SUBCELLULAR LOCATION</scope>
    <scope>TISSUE SPECIFICITY</scope>
    <scope>PHARMACEUTICAL</scope>
</reference>
<accession>A0A7T7DMY7</accession>
<proteinExistence type="evidence at protein level"/>
<sequence>MKTLLLTLVVVTIVCLDLGYTLKCNKLVPLFYKTCPAGKNLCYKMYMVATPKVPVKRGCIDVCPKSSLLVKYVCCNTDRCN</sequence>